<accession>A9M1Z4</accession>
<gene>
    <name evidence="1" type="primary">nagZ</name>
    <name type="ordered locus">NMCC_0468</name>
</gene>
<keyword id="KW-0131">Cell cycle</keyword>
<keyword id="KW-0132">Cell division</keyword>
<keyword id="KW-0133">Cell shape</keyword>
<keyword id="KW-0961">Cell wall biogenesis/degradation</keyword>
<keyword id="KW-0963">Cytoplasm</keyword>
<keyword id="KW-0326">Glycosidase</keyword>
<keyword id="KW-0378">Hydrolase</keyword>
<keyword id="KW-0573">Peptidoglycan synthesis</keyword>
<feature type="chain" id="PRO_1000079576" description="Beta-hexosaminidase">
    <location>
        <begin position="1"/>
        <end position="361"/>
    </location>
</feature>
<feature type="active site" description="Proton donor/acceptor" evidence="1">
    <location>
        <position position="187"/>
    </location>
</feature>
<feature type="active site" description="Nucleophile" evidence="1">
    <location>
        <position position="258"/>
    </location>
</feature>
<feature type="binding site" evidence="1">
    <location>
        <position position="69"/>
    </location>
    <ligand>
        <name>substrate</name>
    </ligand>
</feature>
<feature type="binding site" evidence="1">
    <location>
        <position position="77"/>
    </location>
    <ligand>
        <name>substrate</name>
    </ligand>
</feature>
<feature type="binding site" evidence="1">
    <location>
        <position position="144"/>
    </location>
    <ligand>
        <name>substrate</name>
    </ligand>
</feature>
<feature type="binding site" evidence="1">
    <location>
        <begin position="174"/>
        <end position="175"/>
    </location>
    <ligand>
        <name>substrate</name>
    </ligand>
</feature>
<feature type="site" description="Important for catalytic activity" evidence="1">
    <location>
        <position position="185"/>
    </location>
</feature>
<sequence length="361" mass="38960">MTVPCIPRGLVMADIAAFRLTEEEKQRLLDPAVGGVILFRRNFQNIAQLKELTAEIKALRTPELIIAVDHEGGRVQRFIEGFTRLPAMSTLGEIWDKDGASAAETAAGQVGRVLATELSACGIDLSFTPVLDLDWGNCPVIGNRSFHRNPEAVARLALALQKGLEKGGMKSCGKHFPGHGFVEGDSHLVLPEDGRSLSELEAADLAPFRIMSREGMAAVMPAHVVYPQVDTKPAGFSEIWLKQILRRDIGFKGVIFSDDLTMEGACGAGGIKERARISFEAGCDIVLVCNRPDLVDELREDFRIPDNPALAQRWQYMANTLGSAAAQAVMQTTDFQAAQAFVAGLASPQDTAGGVKVGEAF</sequence>
<evidence type="ECO:0000255" key="1">
    <source>
        <dbReference type="HAMAP-Rule" id="MF_00364"/>
    </source>
</evidence>
<proteinExistence type="inferred from homology"/>
<protein>
    <recommendedName>
        <fullName evidence="1">Beta-hexosaminidase</fullName>
        <ecNumber evidence="1">3.2.1.52</ecNumber>
    </recommendedName>
    <alternativeName>
        <fullName evidence="1">Beta-N-acetylhexosaminidase</fullName>
    </alternativeName>
    <alternativeName>
        <fullName evidence="1">N-acetyl-beta-glucosaminidase</fullName>
    </alternativeName>
</protein>
<organism>
    <name type="scientific">Neisseria meningitidis serogroup C (strain 053442)</name>
    <dbReference type="NCBI Taxonomy" id="374833"/>
    <lineage>
        <taxon>Bacteria</taxon>
        <taxon>Pseudomonadati</taxon>
        <taxon>Pseudomonadota</taxon>
        <taxon>Betaproteobacteria</taxon>
        <taxon>Neisseriales</taxon>
        <taxon>Neisseriaceae</taxon>
        <taxon>Neisseria</taxon>
    </lineage>
</organism>
<comment type="function">
    <text evidence="1">Plays a role in peptidoglycan recycling by cleaving the terminal beta-1,4-linked N-acetylglucosamine (GlcNAc) from peptide-linked peptidoglycan fragments, giving rise to free GlcNAc, anhydro-N-acetylmuramic acid and anhydro-N-acetylmuramic acid-linked peptides.</text>
</comment>
<comment type="catalytic activity">
    <reaction evidence="1">
        <text>Hydrolysis of terminal non-reducing N-acetyl-D-hexosamine residues in N-acetyl-beta-D-hexosaminides.</text>
        <dbReference type="EC" id="3.2.1.52"/>
    </reaction>
</comment>
<comment type="pathway">
    <text evidence="1">Cell wall biogenesis; peptidoglycan recycling.</text>
</comment>
<comment type="subcellular location">
    <subcellularLocation>
        <location evidence="1">Cytoplasm</location>
    </subcellularLocation>
</comment>
<comment type="similarity">
    <text evidence="1">Belongs to the glycosyl hydrolase 3 family. NagZ subfamily.</text>
</comment>
<name>NAGZ_NEIM0</name>
<reference key="1">
    <citation type="journal article" date="2008" name="Genomics">
        <title>Characterization of ST-4821 complex, a unique Neisseria meningitidis clone.</title>
        <authorList>
            <person name="Peng J."/>
            <person name="Yang L."/>
            <person name="Yang F."/>
            <person name="Yang J."/>
            <person name="Yan Y."/>
            <person name="Nie H."/>
            <person name="Zhang X."/>
            <person name="Xiong Z."/>
            <person name="Jiang Y."/>
            <person name="Cheng F."/>
            <person name="Xu X."/>
            <person name="Chen S."/>
            <person name="Sun L."/>
            <person name="Li W."/>
            <person name="Shen Y."/>
            <person name="Shao Z."/>
            <person name="Liang X."/>
            <person name="Xu J."/>
            <person name="Jin Q."/>
        </authorList>
    </citation>
    <scope>NUCLEOTIDE SEQUENCE [LARGE SCALE GENOMIC DNA]</scope>
    <source>
        <strain>053442</strain>
    </source>
</reference>
<dbReference type="EC" id="3.2.1.52" evidence="1"/>
<dbReference type="EMBL" id="CP000381">
    <property type="protein sequence ID" value="ABX72669.1"/>
    <property type="molecule type" value="Genomic_DNA"/>
</dbReference>
<dbReference type="RefSeq" id="WP_012221334.1">
    <property type="nucleotide sequence ID" value="NC_010120.1"/>
</dbReference>
<dbReference type="SMR" id="A9M1Z4"/>
<dbReference type="CAZy" id="GH3">
    <property type="family name" value="Glycoside Hydrolase Family 3"/>
</dbReference>
<dbReference type="KEGG" id="nmn:NMCC_0468"/>
<dbReference type="HOGENOM" id="CLU_008392_0_0_4"/>
<dbReference type="UniPathway" id="UPA00544"/>
<dbReference type="Proteomes" id="UP000001177">
    <property type="component" value="Chromosome"/>
</dbReference>
<dbReference type="GO" id="GO:0005737">
    <property type="term" value="C:cytoplasm"/>
    <property type="evidence" value="ECO:0007669"/>
    <property type="project" value="UniProtKB-SubCell"/>
</dbReference>
<dbReference type="GO" id="GO:0004563">
    <property type="term" value="F:beta-N-acetylhexosaminidase activity"/>
    <property type="evidence" value="ECO:0007669"/>
    <property type="project" value="UniProtKB-UniRule"/>
</dbReference>
<dbReference type="GO" id="GO:0005975">
    <property type="term" value="P:carbohydrate metabolic process"/>
    <property type="evidence" value="ECO:0007669"/>
    <property type="project" value="InterPro"/>
</dbReference>
<dbReference type="GO" id="GO:0051301">
    <property type="term" value="P:cell division"/>
    <property type="evidence" value="ECO:0007669"/>
    <property type="project" value="UniProtKB-KW"/>
</dbReference>
<dbReference type="GO" id="GO:0071555">
    <property type="term" value="P:cell wall organization"/>
    <property type="evidence" value="ECO:0007669"/>
    <property type="project" value="UniProtKB-KW"/>
</dbReference>
<dbReference type="GO" id="GO:0009252">
    <property type="term" value="P:peptidoglycan biosynthetic process"/>
    <property type="evidence" value="ECO:0007669"/>
    <property type="project" value="UniProtKB-KW"/>
</dbReference>
<dbReference type="GO" id="GO:0009254">
    <property type="term" value="P:peptidoglycan turnover"/>
    <property type="evidence" value="ECO:0007669"/>
    <property type="project" value="UniProtKB-UniRule"/>
</dbReference>
<dbReference type="GO" id="GO:0008360">
    <property type="term" value="P:regulation of cell shape"/>
    <property type="evidence" value="ECO:0007669"/>
    <property type="project" value="UniProtKB-KW"/>
</dbReference>
<dbReference type="FunFam" id="3.20.20.300:FF:000001">
    <property type="entry name" value="Beta-hexosaminidase"/>
    <property type="match status" value="1"/>
</dbReference>
<dbReference type="Gene3D" id="3.20.20.300">
    <property type="entry name" value="Glycoside hydrolase, family 3, N-terminal domain"/>
    <property type="match status" value="1"/>
</dbReference>
<dbReference type="HAMAP" id="MF_00364">
    <property type="entry name" value="NagZ"/>
    <property type="match status" value="1"/>
</dbReference>
<dbReference type="InterPro" id="IPR022956">
    <property type="entry name" value="Beta_hexosaminidase_bac"/>
</dbReference>
<dbReference type="InterPro" id="IPR019800">
    <property type="entry name" value="Glyco_hydro_3_AS"/>
</dbReference>
<dbReference type="InterPro" id="IPR001764">
    <property type="entry name" value="Glyco_hydro_3_N"/>
</dbReference>
<dbReference type="InterPro" id="IPR036962">
    <property type="entry name" value="Glyco_hydro_3_N_sf"/>
</dbReference>
<dbReference type="InterPro" id="IPR017853">
    <property type="entry name" value="Glycoside_hydrolase_SF"/>
</dbReference>
<dbReference type="InterPro" id="IPR050226">
    <property type="entry name" value="NagZ_Beta-hexosaminidase"/>
</dbReference>
<dbReference type="NCBIfam" id="NF003740">
    <property type="entry name" value="PRK05337.1"/>
    <property type="match status" value="1"/>
</dbReference>
<dbReference type="PANTHER" id="PTHR30480:SF13">
    <property type="entry name" value="BETA-HEXOSAMINIDASE"/>
    <property type="match status" value="1"/>
</dbReference>
<dbReference type="PANTHER" id="PTHR30480">
    <property type="entry name" value="BETA-HEXOSAMINIDASE-RELATED"/>
    <property type="match status" value="1"/>
</dbReference>
<dbReference type="Pfam" id="PF00933">
    <property type="entry name" value="Glyco_hydro_3"/>
    <property type="match status" value="1"/>
</dbReference>
<dbReference type="SUPFAM" id="SSF51445">
    <property type="entry name" value="(Trans)glycosidases"/>
    <property type="match status" value="1"/>
</dbReference>
<dbReference type="PROSITE" id="PS00775">
    <property type="entry name" value="GLYCOSYL_HYDROL_F3"/>
    <property type="match status" value="1"/>
</dbReference>